<comment type="function">
    <text evidence="1">Channel that opens in response to stretch forces in the membrane lipid bilayer. May participate in the regulation of osmotic pressure changes within the cell.</text>
</comment>
<comment type="subunit">
    <text evidence="1">Homopentamer.</text>
</comment>
<comment type="subcellular location">
    <subcellularLocation>
        <location evidence="1">Cell membrane</location>
        <topology evidence="1">Multi-pass membrane protein</topology>
    </subcellularLocation>
</comment>
<comment type="similarity">
    <text evidence="1">Belongs to the MscL family.</text>
</comment>
<organism>
    <name type="scientific">Syntrophomonas wolfei subsp. wolfei (strain DSM 2245B / Goettingen)</name>
    <dbReference type="NCBI Taxonomy" id="335541"/>
    <lineage>
        <taxon>Bacteria</taxon>
        <taxon>Bacillati</taxon>
        <taxon>Bacillota</taxon>
        <taxon>Clostridia</taxon>
        <taxon>Eubacteriales</taxon>
        <taxon>Syntrophomonadaceae</taxon>
        <taxon>Syntrophomonas</taxon>
    </lineage>
</organism>
<sequence length="150" mass="16362">MWKEFREFAMRGNVIDLAIGIIIGAAFGKIVTSFVNDILMPPIGLLLGKVDFTNLYINLSGKNYSSLADATAAGAPVIKYGVFLNSIIDFIIVAVAIFLVVKQINRLKKQEVAAAPTTKECRYCKSEISIAATRCPFCTSELLDTGRPLK</sequence>
<name>MSCL_SYNWW</name>
<evidence type="ECO:0000255" key="1">
    <source>
        <dbReference type="HAMAP-Rule" id="MF_00115"/>
    </source>
</evidence>
<gene>
    <name evidence="1" type="primary">mscL</name>
    <name type="ordered locus">Swol_1671</name>
</gene>
<dbReference type="EMBL" id="CP000448">
    <property type="protein sequence ID" value="ABI68969.1"/>
    <property type="molecule type" value="Genomic_DNA"/>
</dbReference>
<dbReference type="RefSeq" id="WP_011641067.1">
    <property type="nucleotide sequence ID" value="NC_008346.1"/>
</dbReference>
<dbReference type="SMR" id="Q0AWD5"/>
<dbReference type="STRING" id="335541.Swol_1671"/>
<dbReference type="KEGG" id="swo:Swol_1671"/>
<dbReference type="eggNOG" id="COG1970">
    <property type="taxonomic scope" value="Bacteria"/>
</dbReference>
<dbReference type="HOGENOM" id="CLU_095787_2_3_9"/>
<dbReference type="OrthoDB" id="9810350at2"/>
<dbReference type="Proteomes" id="UP000001968">
    <property type="component" value="Chromosome"/>
</dbReference>
<dbReference type="GO" id="GO:0005886">
    <property type="term" value="C:plasma membrane"/>
    <property type="evidence" value="ECO:0007669"/>
    <property type="project" value="UniProtKB-SubCell"/>
</dbReference>
<dbReference type="GO" id="GO:0008381">
    <property type="term" value="F:mechanosensitive monoatomic ion channel activity"/>
    <property type="evidence" value="ECO:0007669"/>
    <property type="project" value="UniProtKB-UniRule"/>
</dbReference>
<dbReference type="Gene3D" id="1.10.1200.120">
    <property type="entry name" value="Large-conductance mechanosensitive channel, MscL, domain 1"/>
    <property type="match status" value="1"/>
</dbReference>
<dbReference type="HAMAP" id="MF_00115">
    <property type="entry name" value="MscL"/>
    <property type="match status" value="1"/>
</dbReference>
<dbReference type="InterPro" id="IPR019823">
    <property type="entry name" value="Mechanosensitive_channel_CS"/>
</dbReference>
<dbReference type="InterPro" id="IPR001185">
    <property type="entry name" value="MS_channel"/>
</dbReference>
<dbReference type="InterPro" id="IPR037673">
    <property type="entry name" value="MSC/AndL"/>
</dbReference>
<dbReference type="InterPro" id="IPR036019">
    <property type="entry name" value="MscL_channel"/>
</dbReference>
<dbReference type="NCBIfam" id="TIGR00220">
    <property type="entry name" value="mscL"/>
    <property type="match status" value="1"/>
</dbReference>
<dbReference type="NCBIfam" id="NF001843">
    <property type="entry name" value="PRK00567.1-4"/>
    <property type="match status" value="1"/>
</dbReference>
<dbReference type="NCBIfam" id="NF010557">
    <property type="entry name" value="PRK13952.1"/>
    <property type="match status" value="1"/>
</dbReference>
<dbReference type="PANTHER" id="PTHR30266:SF2">
    <property type="entry name" value="LARGE-CONDUCTANCE MECHANOSENSITIVE CHANNEL"/>
    <property type="match status" value="1"/>
</dbReference>
<dbReference type="PANTHER" id="PTHR30266">
    <property type="entry name" value="MECHANOSENSITIVE CHANNEL MSCL"/>
    <property type="match status" value="1"/>
</dbReference>
<dbReference type="Pfam" id="PF01741">
    <property type="entry name" value="MscL"/>
    <property type="match status" value="1"/>
</dbReference>
<dbReference type="PRINTS" id="PR01264">
    <property type="entry name" value="MECHCHANNEL"/>
</dbReference>
<dbReference type="SUPFAM" id="SSF81330">
    <property type="entry name" value="Gated mechanosensitive channel"/>
    <property type="match status" value="1"/>
</dbReference>
<dbReference type="PROSITE" id="PS01327">
    <property type="entry name" value="MSCL"/>
    <property type="match status" value="1"/>
</dbReference>
<accession>Q0AWD5</accession>
<reference key="1">
    <citation type="journal article" date="2010" name="Environ. Microbiol.">
        <title>The genome of Syntrophomonas wolfei: new insights into syntrophic metabolism and biohydrogen production.</title>
        <authorList>
            <person name="Sieber J.R."/>
            <person name="Sims D.R."/>
            <person name="Han C."/>
            <person name="Kim E."/>
            <person name="Lykidis A."/>
            <person name="Lapidus A.L."/>
            <person name="McDonnald E."/>
            <person name="Rohlin L."/>
            <person name="Culley D.E."/>
            <person name="Gunsalus R."/>
            <person name="McInerney M.J."/>
        </authorList>
    </citation>
    <scope>NUCLEOTIDE SEQUENCE [LARGE SCALE GENOMIC DNA]</scope>
    <source>
        <strain>DSM 2245B / Goettingen</strain>
    </source>
</reference>
<keyword id="KW-1003">Cell membrane</keyword>
<keyword id="KW-0407">Ion channel</keyword>
<keyword id="KW-0406">Ion transport</keyword>
<keyword id="KW-0472">Membrane</keyword>
<keyword id="KW-1185">Reference proteome</keyword>
<keyword id="KW-0812">Transmembrane</keyword>
<keyword id="KW-1133">Transmembrane helix</keyword>
<keyword id="KW-0813">Transport</keyword>
<proteinExistence type="inferred from homology"/>
<protein>
    <recommendedName>
        <fullName evidence="1">Large-conductance mechanosensitive channel</fullName>
    </recommendedName>
</protein>
<feature type="chain" id="PRO_1000015433" description="Large-conductance mechanosensitive channel">
    <location>
        <begin position="1"/>
        <end position="150"/>
    </location>
</feature>
<feature type="transmembrane region" description="Helical" evidence="1">
    <location>
        <begin position="14"/>
        <end position="34"/>
    </location>
</feature>
<feature type="transmembrane region" description="Helical" evidence="1">
    <location>
        <begin position="81"/>
        <end position="101"/>
    </location>
</feature>